<dbReference type="EMBL" id="AP006618">
    <property type="protein sequence ID" value="BAD60261.1"/>
    <property type="molecule type" value="Genomic_DNA"/>
</dbReference>
<dbReference type="RefSeq" id="WP_011211943.1">
    <property type="nucleotide sequence ID" value="NC_006361.1"/>
</dbReference>
<dbReference type="SMR" id="Q5YNI0"/>
<dbReference type="STRING" id="247156.NFA_54090"/>
<dbReference type="GeneID" id="61135979"/>
<dbReference type="KEGG" id="nfa:NFA_54090"/>
<dbReference type="eggNOG" id="COG0443">
    <property type="taxonomic scope" value="Bacteria"/>
</dbReference>
<dbReference type="HOGENOM" id="CLU_005965_2_1_11"/>
<dbReference type="OrthoDB" id="9766019at2"/>
<dbReference type="Proteomes" id="UP000006820">
    <property type="component" value="Chromosome"/>
</dbReference>
<dbReference type="GO" id="GO:0005524">
    <property type="term" value="F:ATP binding"/>
    <property type="evidence" value="ECO:0007669"/>
    <property type="project" value="UniProtKB-UniRule"/>
</dbReference>
<dbReference type="GO" id="GO:0140662">
    <property type="term" value="F:ATP-dependent protein folding chaperone"/>
    <property type="evidence" value="ECO:0007669"/>
    <property type="project" value="InterPro"/>
</dbReference>
<dbReference type="GO" id="GO:0051082">
    <property type="term" value="F:unfolded protein binding"/>
    <property type="evidence" value="ECO:0007669"/>
    <property type="project" value="InterPro"/>
</dbReference>
<dbReference type="CDD" id="cd10234">
    <property type="entry name" value="ASKHA_NBD_HSP70_DnaK-like"/>
    <property type="match status" value="1"/>
</dbReference>
<dbReference type="FunFam" id="2.60.34.10:FF:000014">
    <property type="entry name" value="Chaperone protein DnaK HSP70"/>
    <property type="match status" value="1"/>
</dbReference>
<dbReference type="FunFam" id="1.20.1270.10:FF:000001">
    <property type="entry name" value="Molecular chaperone DnaK"/>
    <property type="match status" value="1"/>
</dbReference>
<dbReference type="FunFam" id="3.30.420.40:FF:000071">
    <property type="entry name" value="Molecular chaperone DnaK"/>
    <property type="match status" value="1"/>
</dbReference>
<dbReference type="FunFam" id="3.90.640.10:FF:000003">
    <property type="entry name" value="Molecular chaperone DnaK"/>
    <property type="match status" value="1"/>
</dbReference>
<dbReference type="Gene3D" id="1.20.1270.10">
    <property type="match status" value="1"/>
</dbReference>
<dbReference type="Gene3D" id="3.30.420.40">
    <property type="match status" value="3"/>
</dbReference>
<dbReference type="Gene3D" id="3.90.640.10">
    <property type="entry name" value="Actin, Chain A, domain 4"/>
    <property type="match status" value="1"/>
</dbReference>
<dbReference type="Gene3D" id="2.60.34.10">
    <property type="entry name" value="Substrate Binding Domain Of DNAk, Chain A, domain 1"/>
    <property type="match status" value="1"/>
</dbReference>
<dbReference type="HAMAP" id="MF_00332">
    <property type="entry name" value="DnaK"/>
    <property type="match status" value="1"/>
</dbReference>
<dbReference type="InterPro" id="IPR043129">
    <property type="entry name" value="ATPase_NBD"/>
</dbReference>
<dbReference type="InterPro" id="IPR012725">
    <property type="entry name" value="Chaperone_DnaK"/>
</dbReference>
<dbReference type="InterPro" id="IPR018181">
    <property type="entry name" value="Heat_shock_70_CS"/>
</dbReference>
<dbReference type="InterPro" id="IPR029048">
    <property type="entry name" value="HSP70_C_sf"/>
</dbReference>
<dbReference type="InterPro" id="IPR029047">
    <property type="entry name" value="HSP70_peptide-bd_sf"/>
</dbReference>
<dbReference type="InterPro" id="IPR013126">
    <property type="entry name" value="Hsp_70_fam"/>
</dbReference>
<dbReference type="NCBIfam" id="NF001413">
    <property type="entry name" value="PRK00290.1"/>
    <property type="match status" value="1"/>
</dbReference>
<dbReference type="NCBIfam" id="TIGR02350">
    <property type="entry name" value="prok_dnaK"/>
    <property type="match status" value="1"/>
</dbReference>
<dbReference type="PANTHER" id="PTHR19375">
    <property type="entry name" value="HEAT SHOCK PROTEIN 70KDA"/>
    <property type="match status" value="1"/>
</dbReference>
<dbReference type="Pfam" id="PF00012">
    <property type="entry name" value="HSP70"/>
    <property type="match status" value="1"/>
</dbReference>
<dbReference type="PRINTS" id="PR00301">
    <property type="entry name" value="HEATSHOCK70"/>
</dbReference>
<dbReference type="SUPFAM" id="SSF53067">
    <property type="entry name" value="Actin-like ATPase domain"/>
    <property type="match status" value="2"/>
</dbReference>
<dbReference type="SUPFAM" id="SSF100934">
    <property type="entry name" value="Heat shock protein 70kD (HSP70), C-terminal subdomain"/>
    <property type="match status" value="1"/>
</dbReference>
<dbReference type="SUPFAM" id="SSF100920">
    <property type="entry name" value="Heat shock protein 70kD (HSP70), peptide-binding domain"/>
    <property type="match status" value="1"/>
</dbReference>
<dbReference type="PROSITE" id="PS00297">
    <property type="entry name" value="HSP70_1"/>
    <property type="match status" value="1"/>
</dbReference>
<dbReference type="PROSITE" id="PS00329">
    <property type="entry name" value="HSP70_2"/>
    <property type="match status" value="1"/>
</dbReference>
<dbReference type="PROSITE" id="PS01036">
    <property type="entry name" value="HSP70_3"/>
    <property type="match status" value="1"/>
</dbReference>
<name>DNAK_NOCFA</name>
<sequence length="615" mass="65760">MARAVGIDLGTTNSVVAVLEGGEPVVVANSEGSRTTPSIVAFAKNGEVLVGQPAKNQAVTNVDRTIRSVKRHIGTDWTVEIDGKKYTPQEISARTLMKLKRDAEAYLGEEITDAVITVPAYFEDAQRQATKEAGQIAGLNVLRIVNEPTAAALAYGLDKGDKEQTILVFDLGGGTFDVSLLEIGEGVVEVRATSGDNHLGGDDWDQRIVNWLVDKFKASSGIDLTKDKMAMQRLREAAEKAKIELSSSQSTSINLPYITVDADKNPLFLDEQLSRAEFQKITSDLLDRTRAPFQQVIKDAGISVSDIDHVVLVGGSTRMPAVSDLVRELTGGKEPNKGVNPDEVVAVGAALQAGVLKGEVKDVLLLDVTPLSLGIETKGGVMTKLIERNTTIPTKRSETFTTADDNQPSVQIQVFQGEREIAAHNKLLGSFELTGIPPAPRGVPQIEVTFDIDANGIVHVTAKDKGTGKENTIKIQDGSGLSKEEIDRMIKDAEQHAAEDKARREEAETRNQAETLVHQTEKFIKDNEDKVPADVKSKVEAAIAEANEALAGTDIAAVKAAVEKLATESQALGQAIYEAQGADAAASSNGAASSANDDQVVDAEVVDEPVDTEKK</sequence>
<protein>
    <recommendedName>
        <fullName evidence="1">Chaperone protein DnaK</fullName>
    </recommendedName>
    <alternativeName>
        <fullName evidence="1">HSP70</fullName>
    </alternativeName>
    <alternativeName>
        <fullName evidence="1">Heat shock 70 kDa protein</fullName>
    </alternativeName>
    <alternativeName>
        <fullName evidence="1">Heat shock protein 70</fullName>
    </alternativeName>
</protein>
<gene>
    <name evidence="1" type="primary">dnaK</name>
    <name type="ordered locus">NFA_54090</name>
</gene>
<feature type="chain" id="PRO_0000225987" description="Chaperone protein DnaK">
    <location>
        <begin position="1"/>
        <end position="615"/>
    </location>
</feature>
<feature type="region of interest" description="Disordered" evidence="2">
    <location>
        <begin position="580"/>
        <end position="615"/>
    </location>
</feature>
<feature type="compositionally biased region" description="Low complexity" evidence="2">
    <location>
        <begin position="580"/>
        <end position="598"/>
    </location>
</feature>
<feature type="compositionally biased region" description="Acidic residues" evidence="2">
    <location>
        <begin position="599"/>
        <end position="615"/>
    </location>
</feature>
<feature type="modified residue" description="Phosphothreonine; by autocatalysis" evidence="1">
    <location>
        <position position="175"/>
    </location>
</feature>
<keyword id="KW-0067">ATP-binding</keyword>
<keyword id="KW-0143">Chaperone</keyword>
<keyword id="KW-0547">Nucleotide-binding</keyword>
<keyword id="KW-0597">Phosphoprotein</keyword>
<keyword id="KW-1185">Reference proteome</keyword>
<keyword id="KW-0346">Stress response</keyword>
<comment type="function">
    <text evidence="1">Acts as a chaperone.</text>
</comment>
<comment type="induction">
    <text evidence="1">By stress conditions e.g. heat shock.</text>
</comment>
<comment type="similarity">
    <text evidence="1">Belongs to the heat shock protein 70 family.</text>
</comment>
<accession>Q5YNI0</accession>
<reference key="1">
    <citation type="journal article" date="2004" name="Proc. Natl. Acad. Sci. U.S.A.">
        <title>The complete genomic sequence of Nocardia farcinica IFM 10152.</title>
        <authorList>
            <person name="Ishikawa J."/>
            <person name="Yamashita A."/>
            <person name="Mikami Y."/>
            <person name="Hoshino Y."/>
            <person name="Kurita H."/>
            <person name="Hotta K."/>
            <person name="Shiba T."/>
            <person name="Hattori M."/>
        </authorList>
    </citation>
    <scope>NUCLEOTIDE SEQUENCE [LARGE SCALE GENOMIC DNA]</scope>
    <source>
        <strain>IFM 10152</strain>
    </source>
</reference>
<proteinExistence type="inferred from homology"/>
<organism>
    <name type="scientific">Nocardia farcinica (strain IFM 10152)</name>
    <dbReference type="NCBI Taxonomy" id="247156"/>
    <lineage>
        <taxon>Bacteria</taxon>
        <taxon>Bacillati</taxon>
        <taxon>Actinomycetota</taxon>
        <taxon>Actinomycetes</taxon>
        <taxon>Mycobacteriales</taxon>
        <taxon>Nocardiaceae</taxon>
        <taxon>Nocardia</taxon>
    </lineage>
</organism>
<evidence type="ECO:0000255" key="1">
    <source>
        <dbReference type="HAMAP-Rule" id="MF_00332"/>
    </source>
</evidence>
<evidence type="ECO:0000256" key="2">
    <source>
        <dbReference type="SAM" id="MobiDB-lite"/>
    </source>
</evidence>